<comment type="induction">
    <text>Expressed in the early phase of the viral replicative cycle.</text>
</comment>
<comment type="similarity">
    <text evidence="1">Belongs to the orthopoxvirus OPG191 protein family.</text>
</comment>
<accession>A0A7H0DNF3</accession>
<name>PG191_MONPV</name>
<feature type="chain" id="PRO_0000457598" description="Protein OPG191">
    <location>
        <begin position="1"/>
        <end position="168"/>
    </location>
</feature>
<gene>
    <name type="primary">OPG191</name>
    <name type="ORF">MPXVgp168</name>
</gene>
<proteinExistence type="evidence at transcript level"/>
<organism>
    <name type="scientific">Monkeypox virus</name>
    <dbReference type="NCBI Taxonomy" id="10244"/>
    <lineage>
        <taxon>Viruses</taxon>
        <taxon>Varidnaviria</taxon>
        <taxon>Bamfordvirae</taxon>
        <taxon>Nucleocytoviricota</taxon>
        <taxon>Pokkesviricetes</taxon>
        <taxon>Chitovirales</taxon>
        <taxon>Poxviridae</taxon>
        <taxon>Chordopoxvirinae</taxon>
        <taxon>Orthopoxvirus</taxon>
    </lineage>
</organism>
<evidence type="ECO:0000305" key="1"/>
<dbReference type="EMBL" id="MT903340">
    <property type="protein sequence ID" value="QNP13036.1"/>
    <property type="molecule type" value="Genomic_DNA"/>
</dbReference>
<dbReference type="RefSeq" id="YP_010377163.1">
    <property type="nucleotide sequence ID" value="NC_063383.1"/>
</dbReference>
<dbReference type="GeneID" id="72551577"/>
<dbReference type="Proteomes" id="UP000516359">
    <property type="component" value="Genome"/>
</dbReference>
<dbReference type="InterPro" id="IPR009974">
    <property type="entry name" value="Vaccinia_virus_B6"/>
</dbReference>
<dbReference type="Pfam" id="PF07389">
    <property type="entry name" value="Pox_B6"/>
    <property type="match status" value="1"/>
</dbReference>
<keyword id="KW-0244">Early protein</keyword>
<keyword id="KW-1185">Reference proteome</keyword>
<reference key="1">
    <citation type="journal article" date="2022" name="J. Infect. Dis.">
        <title>Exportation of Monkeypox virus from the African continent.</title>
        <authorList>
            <person name="Mauldin M.R."/>
            <person name="McCollum A.M."/>
            <person name="Nakazawa Y.J."/>
            <person name="Mandra A."/>
            <person name="Whitehouse E.R."/>
            <person name="Davidson W."/>
            <person name="Zhao H."/>
            <person name="Gao J."/>
            <person name="Li Y."/>
            <person name="Doty J."/>
            <person name="Yinka-Ogunleye A."/>
            <person name="Akinpelu A."/>
            <person name="Aruna O."/>
            <person name="Naidoo D."/>
            <person name="Lewandowski K."/>
            <person name="Afrough B."/>
            <person name="Graham V."/>
            <person name="Aarons E."/>
            <person name="Hewson R."/>
            <person name="Vipond R."/>
            <person name="Dunning J."/>
            <person name="Chand M."/>
            <person name="Brown C."/>
            <person name="Cohen-Gihon I."/>
            <person name="Erez N."/>
            <person name="Shifman O."/>
            <person name="Israeli O."/>
            <person name="Sharon M."/>
            <person name="Schwartz E."/>
            <person name="Beth-Din A."/>
            <person name="Zvi A."/>
            <person name="Mak T.M."/>
            <person name="Ng Y.K."/>
            <person name="Cui L."/>
            <person name="Lin R.T.P."/>
            <person name="Olson V.A."/>
            <person name="Brooks T."/>
            <person name="Paran N."/>
            <person name="Ihekweazu C."/>
            <person name="Reynolds M.G."/>
        </authorList>
    </citation>
    <scope>NUCLEOTIDE SEQUENCE [LARGE SCALE GENOMIC DNA]</scope>
    <source>
        <strain>MPXV-M5312_HM12_Rivers</strain>
    </source>
</reference>
<protein>
    <recommendedName>
        <fullName>Protein OPG191</fullName>
    </recommendedName>
</protein>
<sequence>MSSSVDVDIYDAVRAFLLRHYYDKRFIVYGRSNTILHNIYRLFTRCTVIPFDDIVRTMPNESRVKQWVMDTLNGIMMNEFDTVCVGTGLRFMEMFFDYNKNNPKNSINNQIMYDIINSVAIILANERYRSAFNDDRIYIRRTMMDKLYEYASLTTIGTITGGVCYFIC</sequence>
<organismHost>
    <name type="scientific">Cynomys gunnisoni</name>
    <name type="common">Gunnison's prairie dog</name>
    <name type="synonym">Spermophilus gunnisoni</name>
    <dbReference type="NCBI Taxonomy" id="45479"/>
</organismHost>
<organismHost>
    <name type="scientific">Cynomys leucurus</name>
    <name type="common">White-tailed prairie dog</name>
    <dbReference type="NCBI Taxonomy" id="99825"/>
</organismHost>
<organismHost>
    <name type="scientific">Cynomys ludovicianus</name>
    <name type="common">Black-tailed prairie dog</name>
    <dbReference type="NCBI Taxonomy" id="45480"/>
</organismHost>
<organismHost>
    <name type="scientific">Cynomys mexicanus</name>
    <name type="common">Mexican prairie dog</name>
    <dbReference type="NCBI Taxonomy" id="99826"/>
</organismHost>
<organismHost>
    <name type="scientific">Cynomys parvidens</name>
    <name type="common">Utah prairie dog</name>
    <dbReference type="NCBI Taxonomy" id="99827"/>
</organismHost>
<organismHost>
    <name type="scientific">Gliridae</name>
    <name type="common">dormice</name>
    <dbReference type="NCBI Taxonomy" id="30650"/>
</organismHost>
<organismHost>
    <name type="scientific">Heliosciurus ruwenzorii</name>
    <name type="common">Ruwenzori sun squirrel</name>
    <dbReference type="NCBI Taxonomy" id="226685"/>
</organismHost>
<organismHost>
    <name type="scientific">Homo sapiens</name>
    <name type="common">Human</name>
    <dbReference type="NCBI Taxonomy" id="9606"/>
</organismHost>
<organismHost>
    <name type="scientific">Mus musculus</name>
    <name type="common">Mouse</name>
    <dbReference type="NCBI Taxonomy" id="10090"/>
</organismHost>